<feature type="chain" id="PRO_1000074854" description="Elongation factor Ts">
    <location>
        <begin position="1"/>
        <end position="305"/>
    </location>
</feature>
<feature type="region of interest" description="Involved in Mg(2+) ion dislocation from EF-Tu" evidence="1">
    <location>
        <begin position="79"/>
        <end position="82"/>
    </location>
</feature>
<organism>
    <name type="scientific">Brucella canis (strain ATCC 23365 / NCTC 10854 / RM-666)</name>
    <dbReference type="NCBI Taxonomy" id="483179"/>
    <lineage>
        <taxon>Bacteria</taxon>
        <taxon>Pseudomonadati</taxon>
        <taxon>Pseudomonadota</taxon>
        <taxon>Alphaproteobacteria</taxon>
        <taxon>Hyphomicrobiales</taxon>
        <taxon>Brucellaceae</taxon>
        <taxon>Brucella/Ochrobactrum group</taxon>
        <taxon>Brucella</taxon>
    </lineage>
</organism>
<comment type="function">
    <text evidence="1">Associates with the EF-Tu.GDP complex and induces the exchange of GDP to GTP. It remains bound to the aminoacyl-tRNA.EF-Tu.GTP complex up to the GTP hydrolysis stage on the ribosome.</text>
</comment>
<comment type="subcellular location">
    <subcellularLocation>
        <location evidence="1">Cytoplasm</location>
    </subcellularLocation>
</comment>
<comment type="similarity">
    <text evidence="1">Belongs to the EF-Ts family.</text>
</comment>
<name>EFTS_BRUC2</name>
<dbReference type="EMBL" id="CP000872">
    <property type="protein sequence ID" value="ABX62228.1"/>
    <property type="molecule type" value="Genomic_DNA"/>
</dbReference>
<dbReference type="RefSeq" id="WP_002964288.1">
    <property type="nucleotide sequence ID" value="NC_010103.1"/>
</dbReference>
<dbReference type="SMR" id="A9M5H3"/>
<dbReference type="GeneID" id="93016505"/>
<dbReference type="KEGG" id="bcs:BCAN_A1179"/>
<dbReference type="HOGENOM" id="CLU_047155_2_0_5"/>
<dbReference type="PhylomeDB" id="A9M5H3"/>
<dbReference type="Proteomes" id="UP000001385">
    <property type="component" value="Chromosome I"/>
</dbReference>
<dbReference type="GO" id="GO:0005737">
    <property type="term" value="C:cytoplasm"/>
    <property type="evidence" value="ECO:0007669"/>
    <property type="project" value="UniProtKB-SubCell"/>
</dbReference>
<dbReference type="GO" id="GO:0003746">
    <property type="term" value="F:translation elongation factor activity"/>
    <property type="evidence" value="ECO:0007669"/>
    <property type="project" value="UniProtKB-UniRule"/>
</dbReference>
<dbReference type="CDD" id="cd14275">
    <property type="entry name" value="UBA_EF-Ts"/>
    <property type="match status" value="1"/>
</dbReference>
<dbReference type="FunFam" id="1.10.286.20:FF:000001">
    <property type="entry name" value="Elongation factor Ts"/>
    <property type="match status" value="1"/>
</dbReference>
<dbReference type="FunFam" id="1.10.8.10:FF:000001">
    <property type="entry name" value="Elongation factor Ts"/>
    <property type="match status" value="1"/>
</dbReference>
<dbReference type="Gene3D" id="1.10.286.20">
    <property type="match status" value="1"/>
</dbReference>
<dbReference type="Gene3D" id="1.10.8.10">
    <property type="entry name" value="DNA helicase RuvA subunit, C-terminal domain"/>
    <property type="match status" value="1"/>
</dbReference>
<dbReference type="Gene3D" id="3.30.479.20">
    <property type="entry name" value="Elongation factor Ts, dimerisation domain"/>
    <property type="match status" value="2"/>
</dbReference>
<dbReference type="HAMAP" id="MF_00050">
    <property type="entry name" value="EF_Ts"/>
    <property type="match status" value="1"/>
</dbReference>
<dbReference type="InterPro" id="IPR036402">
    <property type="entry name" value="EF-Ts_dimer_sf"/>
</dbReference>
<dbReference type="InterPro" id="IPR001816">
    <property type="entry name" value="Transl_elong_EFTs/EF1B"/>
</dbReference>
<dbReference type="InterPro" id="IPR014039">
    <property type="entry name" value="Transl_elong_EFTs/EF1B_dimer"/>
</dbReference>
<dbReference type="InterPro" id="IPR018101">
    <property type="entry name" value="Transl_elong_Ts_CS"/>
</dbReference>
<dbReference type="InterPro" id="IPR009060">
    <property type="entry name" value="UBA-like_sf"/>
</dbReference>
<dbReference type="NCBIfam" id="TIGR00116">
    <property type="entry name" value="tsf"/>
    <property type="match status" value="1"/>
</dbReference>
<dbReference type="PANTHER" id="PTHR11741">
    <property type="entry name" value="ELONGATION FACTOR TS"/>
    <property type="match status" value="1"/>
</dbReference>
<dbReference type="PANTHER" id="PTHR11741:SF0">
    <property type="entry name" value="ELONGATION FACTOR TS, MITOCHONDRIAL"/>
    <property type="match status" value="1"/>
</dbReference>
<dbReference type="Pfam" id="PF00889">
    <property type="entry name" value="EF_TS"/>
    <property type="match status" value="1"/>
</dbReference>
<dbReference type="SUPFAM" id="SSF54713">
    <property type="entry name" value="Elongation factor Ts (EF-Ts), dimerisation domain"/>
    <property type="match status" value="2"/>
</dbReference>
<dbReference type="SUPFAM" id="SSF46934">
    <property type="entry name" value="UBA-like"/>
    <property type="match status" value="1"/>
</dbReference>
<dbReference type="PROSITE" id="PS01127">
    <property type="entry name" value="EF_TS_2"/>
    <property type="match status" value="1"/>
</dbReference>
<evidence type="ECO:0000255" key="1">
    <source>
        <dbReference type="HAMAP-Rule" id="MF_00050"/>
    </source>
</evidence>
<keyword id="KW-0963">Cytoplasm</keyword>
<keyword id="KW-0251">Elongation factor</keyword>
<keyword id="KW-0648">Protein biosynthesis</keyword>
<keyword id="KW-1185">Reference proteome</keyword>
<sequence>MSISASLVKELRDLTGAGMMDCKAALAATEGKIEAAVDWLRAKGIAKADKKAGRTAAEGLVGVAASGNKAVVVEVNSETDFVARNDAFQELVRKIAQAALSTDGSSEAVANANVDGKTVTEAAKDAVATIGENISFRRSAALSVPQGVVATYIHNGVADGLGKLGVLVAIETAGDAEAAQAFGRQVAMHVAAVNPLALTSADVNPEAAEREKAIFIDQARQSGKPDNIIEKMVEGRMRKFYEEVVLLSQAFVINPDLTVEAALKDAEKAIGAPAKITGFARIALGEGIEKEESDFAAEVAAAAKG</sequence>
<reference key="1">
    <citation type="submission" date="2007-10" db="EMBL/GenBank/DDBJ databases">
        <title>Brucella canis ATCC 23365 whole genome shotgun sequencing project.</title>
        <authorList>
            <person name="Setubal J.C."/>
            <person name="Bowns C."/>
            <person name="Boyle S."/>
            <person name="Crasta O.R."/>
            <person name="Czar M.J."/>
            <person name="Dharmanolla C."/>
            <person name="Gillespie J.J."/>
            <person name="Kenyon R.W."/>
            <person name="Lu J."/>
            <person name="Mane S."/>
            <person name="Mohapatra S."/>
            <person name="Nagrani S."/>
            <person name="Purkayastha A."/>
            <person name="Rajasimha H.K."/>
            <person name="Shallom J.M."/>
            <person name="Shallom S."/>
            <person name="Shukla M."/>
            <person name="Snyder E.E."/>
            <person name="Sobral B.W."/>
            <person name="Wattam A.R."/>
            <person name="Will R."/>
            <person name="Williams K."/>
            <person name="Yoo H."/>
            <person name="Bruce D."/>
            <person name="Detter C."/>
            <person name="Munk C."/>
            <person name="Brettin T.S."/>
        </authorList>
    </citation>
    <scope>NUCLEOTIDE SEQUENCE [LARGE SCALE GENOMIC DNA]</scope>
    <source>
        <strain>ATCC 23365 / NCTC 10854 / RM-666</strain>
    </source>
</reference>
<protein>
    <recommendedName>
        <fullName evidence="1">Elongation factor Ts</fullName>
        <shortName evidence="1">EF-Ts</shortName>
    </recommendedName>
</protein>
<accession>A9M5H3</accession>
<proteinExistence type="inferred from homology"/>
<gene>
    <name evidence="1" type="primary">tsf</name>
    <name type="ordered locus">BCAN_A1179</name>
</gene>